<evidence type="ECO:0000255" key="1">
    <source>
        <dbReference type="HAMAP-Rule" id="MF_00752"/>
    </source>
</evidence>
<evidence type="ECO:0000305" key="2"/>
<reference key="1">
    <citation type="journal article" date="2007" name="PLoS Genet.">
        <title>Patterns and implications of gene gain and loss in the evolution of Prochlorococcus.</title>
        <authorList>
            <person name="Kettler G.C."/>
            <person name="Martiny A.C."/>
            <person name="Huang K."/>
            <person name="Zucker J."/>
            <person name="Coleman M.L."/>
            <person name="Rodrigue S."/>
            <person name="Chen F."/>
            <person name="Lapidus A."/>
            <person name="Ferriera S."/>
            <person name="Johnson J."/>
            <person name="Steglich C."/>
            <person name="Church G.M."/>
            <person name="Richardson P."/>
            <person name="Chisholm S.W."/>
        </authorList>
    </citation>
    <scope>NUCLEOTIDE SEQUENCE [LARGE SCALE GENOMIC DNA]</scope>
    <source>
        <strain>NATL2A</strain>
    </source>
</reference>
<organism>
    <name type="scientific">Prochlorococcus marinus (strain NATL2A)</name>
    <dbReference type="NCBI Taxonomy" id="59920"/>
    <lineage>
        <taxon>Bacteria</taxon>
        <taxon>Bacillati</taxon>
        <taxon>Cyanobacteriota</taxon>
        <taxon>Cyanophyceae</taxon>
        <taxon>Synechococcales</taxon>
        <taxon>Prochlorococcaceae</taxon>
        <taxon>Prochlorococcus</taxon>
    </lineage>
</organism>
<comment type="function">
    <text evidence="1">One of the components of the core complex of photosystem II (PSII), required for its stability and/or assembly. PSII is a light-driven water:plastoquinone oxidoreductase that uses light energy to abstract electrons from H(2)O, generating O(2) and a proton gradient subsequently used for ATP formation. It consists of a core antenna complex that captures photons, and an electron transfer chain that converts photonic excitation into a charge separation.</text>
</comment>
<comment type="subunit">
    <text evidence="2">PSII is composed of 1 copy each of membrane proteins PsbA, PsbB, PsbC, PsbD, PsbE, PsbF, PsbH, PsbI, PsbJ, PsbK, PsbL, PsbM, PsbT, PsbX, PsbY, Psb30/Ycf12, peripheral proteins PsbO, CyanoQ (PsbQ), PsbU, PsbV and a large number of cofactors. It forms dimeric complexes.</text>
</comment>
<comment type="subcellular location">
    <subcellularLocation>
        <location evidence="1">Cellular thylakoid membrane</location>
        <topology evidence="1">Single-pass membrane protein</topology>
    </subcellularLocation>
</comment>
<comment type="similarity">
    <text evidence="1">Belongs to the PsbH family.</text>
</comment>
<accession>Q46HC2</accession>
<sequence>MGQKTALGSLLKSIGNSGQGKVVPGWGAVPVMAFIGVLLLVFLVIMLQIYNQSLLLQGFSVDWNG</sequence>
<proteinExistence type="inferred from homology"/>
<name>PSBH_PROMT</name>
<protein>
    <recommendedName>
        <fullName evidence="1">Photosystem II reaction center protein H</fullName>
        <shortName evidence="1">PSII-H</shortName>
    </recommendedName>
</protein>
<keyword id="KW-0472">Membrane</keyword>
<keyword id="KW-0602">Photosynthesis</keyword>
<keyword id="KW-0604">Photosystem II</keyword>
<keyword id="KW-1185">Reference proteome</keyword>
<keyword id="KW-0793">Thylakoid</keyword>
<keyword id="KW-0812">Transmembrane</keyword>
<keyword id="KW-1133">Transmembrane helix</keyword>
<gene>
    <name evidence="1" type="primary">psbH</name>
    <name type="ordered locus">PMN2A_1618</name>
</gene>
<feature type="chain" id="PRO_1000046591" description="Photosystem II reaction center protein H">
    <location>
        <begin position="1"/>
        <end position="65"/>
    </location>
</feature>
<feature type="transmembrane region" description="Helical" evidence="1">
    <location>
        <begin position="27"/>
        <end position="47"/>
    </location>
</feature>
<dbReference type="EMBL" id="CP000095">
    <property type="protein sequence ID" value="AAZ59106.1"/>
    <property type="molecule type" value="Genomic_DNA"/>
</dbReference>
<dbReference type="RefSeq" id="WP_011294251.1">
    <property type="nucleotide sequence ID" value="NC_007335.2"/>
</dbReference>
<dbReference type="SMR" id="Q46HC2"/>
<dbReference type="STRING" id="59920.PMN2A_1618"/>
<dbReference type="KEGG" id="pmn:PMN2A_1618"/>
<dbReference type="HOGENOM" id="CLU_190203_0_0_3"/>
<dbReference type="OrthoDB" id="427121at2"/>
<dbReference type="PhylomeDB" id="Q46HC2"/>
<dbReference type="Proteomes" id="UP000002535">
    <property type="component" value="Chromosome"/>
</dbReference>
<dbReference type="GO" id="GO:0009523">
    <property type="term" value="C:photosystem II"/>
    <property type="evidence" value="ECO:0007669"/>
    <property type="project" value="UniProtKB-KW"/>
</dbReference>
<dbReference type="GO" id="GO:0031676">
    <property type="term" value="C:plasma membrane-derived thylakoid membrane"/>
    <property type="evidence" value="ECO:0007669"/>
    <property type="project" value="UniProtKB-SubCell"/>
</dbReference>
<dbReference type="GO" id="GO:0042301">
    <property type="term" value="F:phosphate ion binding"/>
    <property type="evidence" value="ECO:0007669"/>
    <property type="project" value="InterPro"/>
</dbReference>
<dbReference type="GO" id="GO:0015979">
    <property type="term" value="P:photosynthesis"/>
    <property type="evidence" value="ECO:0007669"/>
    <property type="project" value="UniProtKB-UniRule"/>
</dbReference>
<dbReference type="GO" id="GO:0050821">
    <property type="term" value="P:protein stabilization"/>
    <property type="evidence" value="ECO:0007669"/>
    <property type="project" value="InterPro"/>
</dbReference>
<dbReference type="Gene3D" id="1.20.5.880">
    <property type="entry name" value="Photosystem II reaction center protein H"/>
    <property type="match status" value="1"/>
</dbReference>
<dbReference type="HAMAP" id="MF_00752">
    <property type="entry name" value="PSII_PsbH"/>
    <property type="match status" value="1"/>
</dbReference>
<dbReference type="InterPro" id="IPR001056">
    <property type="entry name" value="PSII_PsbH"/>
</dbReference>
<dbReference type="InterPro" id="IPR036863">
    <property type="entry name" value="PSII_PsbH_sf"/>
</dbReference>
<dbReference type="NCBIfam" id="NF002728">
    <property type="entry name" value="PRK02624.1"/>
    <property type="match status" value="1"/>
</dbReference>
<dbReference type="PANTHER" id="PTHR34469">
    <property type="entry name" value="PHOTOSYSTEM II REACTION CENTER PROTEIN H"/>
    <property type="match status" value="1"/>
</dbReference>
<dbReference type="PANTHER" id="PTHR34469:SF4">
    <property type="entry name" value="PHOTOSYSTEM II REACTION CENTER PROTEIN H"/>
    <property type="match status" value="1"/>
</dbReference>
<dbReference type="Pfam" id="PF00737">
    <property type="entry name" value="PsbH"/>
    <property type="match status" value="1"/>
</dbReference>
<dbReference type="SUPFAM" id="SSF161025">
    <property type="entry name" value="Photosystem II 10 kDa phosphoprotein PsbH"/>
    <property type="match status" value="1"/>
</dbReference>